<evidence type="ECO:0000255" key="1">
    <source>
        <dbReference type="HAMAP-Rule" id="MF_00163"/>
    </source>
</evidence>
<proteinExistence type="inferred from homology"/>
<name>DEF_STREM</name>
<organism>
    <name type="scientific">Streptococcus equi subsp. zooepidemicus (strain MGCS10565)</name>
    <dbReference type="NCBI Taxonomy" id="552526"/>
    <lineage>
        <taxon>Bacteria</taxon>
        <taxon>Bacillati</taxon>
        <taxon>Bacillota</taxon>
        <taxon>Bacilli</taxon>
        <taxon>Lactobacillales</taxon>
        <taxon>Streptococcaceae</taxon>
        <taxon>Streptococcus</taxon>
    </lineage>
</organism>
<keyword id="KW-0378">Hydrolase</keyword>
<keyword id="KW-0408">Iron</keyword>
<keyword id="KW-0479">Metal-binding</keyword>
<keyword id="KW-0648">Protein biosynthesis</keyword>
<accession>B4U576</accession>
<sequence length="204" mass="22837">MSAQDKLIKAQHLIDMNDIIREGNPTLRAVAKEVEFPLSDDDIILGEKMMQFLKHSQDPVMGEKLGLRAGVGLAAPQIDVSKRIIAVLVPNPEDSEGNPPKEAYSMEEVLYNPKIVSHSVQDAALADGEGCLSVDRVVEGYVVRHARVTVEYYDKHNEKHRIKLKGYNAIVVQHEIDHINGVLFYDRINAKNPFEAKEGMLILE</sequence>
<gene>
    <name evidence="1" type="primary">def</name>
    <name type="ordered locus">Sez_1760</name>
</gene>
<feature type="chain" id="PRO_1000097345" description="Peptide deformylase">
    <location>
        <begin position="1"/>
        <end position="204"/>
    </location>
</feature>
<feature type="active site" evidence="1">
    <location>
        <position position="175"/>
    </location>
</feature>
<feature type="binding site" evidence="1">
    <location>
        <position position="131"/>
    </location>
    <ligand>
        <name>Fe cation</name>
        <dbReference type="ChEBI" id="CHEBI:24875"/>
    </ligand>
</feature>
<feature type="binding site" evidence="1">
    <location>
        <position position="174"/>
    </location>
    <ligand>
        <name>Fe cation</name>
        <dbReference type="ChEBI" id="CHEBI:24875"/>
    </ligand>
</feature>
<feature type="binding site" evidence="1">
    <location>
        <position position="178"/>
    </location>
    <ligand>
        <name>Fe cation</name>
        <dbReference type="ChEBI" id="CHEBI:24875"/>
    </ligand>
</feature>
<protein>
    <recommendedName>
        <fullName evidence="1">Peptide deformylase</fullName>
        <shortName evidence="1">PDF</shortName>
        <ecNumber evidence="1">3.5.1.88</ecNumber>
    </recommendedName>
    <alternativeName>
        <fullName evidence="1">Polypeptide deformylase</fullName>
    </alternativeName>
</protein>
<reference key="1">
    <citation type="journal article" date="2008" name="PLoS ONE">
        <title>Genome sequence of a lancefield group C Streptococcus zooepidemicus strain causing epidemic nephritis: new information about an old disease.</title>
        <authorList>
            <person name="Beres S.B."/>
            <person name="Sesso R."/>
            <person name="Pinto S.W.L."/>
            <person name="Hoe N.P."/>
            <person name="Porcella S.F."/>
            <person name="Deleo F.R."/>
            <person name="Musser J.M."/>
        </authorList>
    </citation>
    <scope>NUCLEOTIDE SEQUENCE [LARGE SCALE GENOMIC DNA]</scope>
    <source>
        <strain>MGCS10565</strain>
    </source>
</reference>
<comment type="function">
    <text evidence="1">Removes the formyl group from the N-terminal Met of newly synthesized proteins. Requires at least a dipeptide for an efficient rate of reaction. N-terminal L-methionine is a prerequisite for activity but the enzyme has broad specificity at other positions.</text>
</comment>
<comment type="catalytic activity">
    <reaction evidence="1">
        <text>N-terminal N-formyl-L-methionyl-[peptide] + H2O = N-terminal L-methionyl-[peptide] + formate</text>
        <dbReference type="Rhea" id="RHEA:24420"/>
        <dbReference type="Rhea" id="RHEA-COMP:10639"/>
        <dbReference type="Rhea" id="RHEA-COMP:10640"/>
        <dbReference type="ChEBI" id="CHEBI:15377"/>
        <dbReference type="ChEBI" id="CHEBI:15740"/>
        <dbReference type="ChEBI" id="CHEBI:49298"/>
        <dbReference type="ChEBI" id="CHEBI:64731"/>
        <dbReference type="EC" id="3.5.1.88"/>
    </reaction>
</comment>
<comment type="cofactor">
    <cofactor evidence="1">
        <name>Fe(2+)</name>
        <dbReference type="ChEBI" id="CHEBI:29033"/>
    </cofactor>
    <text evidence="1">Binds 1 Fe(2+) ion.</text>
</comment>
<comment type="similarity">
    <text evidence="1">Belongs to the polypeptide deformylase family.</text>
</comment>
<dbReference type="EC" id="3.5.1.88" evidence="1"/>
<dbReference type="EMBL" id="CP001129">
    <property type="protein sequence ID" value="ACG63087.1"/>
    <property type="molecule type" value="Genomic_DNA"/>
</dbReference>
<dbReference type="RefSeq" id="WP_012516337.1">
    <property type="nucleotide sequence ID" value="NC_011134.1"/>
</dbReference>
<dbReference type="SMR" id="B4U576"/>
<dbReference type="KEGG" id="sez:Sez_1760"/>
<dbReference type="HOGENOM" id="CLU_061901_4_0_9"/>
<dbReference type="Proteomes" id="UP000001873">
    <property type="component" value="Chromosome"/>
</dbReference>
<dbReference type="GO" id="GO:0046872">
    <property type="term" value="F:metal ion binding"/>
    <property type="evidence" value="ECO:0007669"/>
    <property type="project" value="UniProtKB-KW"/>
</dbReference>
<dbReference type="GO" id="GO:0042586">
    <property type="term" value="F:peptide deformylase activity"/>
    <property type="evidence" value="ECO:0007669"/>
    <property type="project" value="UniProtKB-UniRule"/>
</dbReference>
<dbReference type="GO" id="GO:0043686">
    <property type="term" value="P:co-translational protein modification"/>
    <property type="evidence" value="ECO:0007669"/>
    <property type="project" value="TreeGrafter"/>
</dbReference>
<dbReference type="GO" id="GO:0006412">
    <property type="term" value="P:translation"/>
    <property type="evidence" value="ECO:0007669"/>
    <property type="project" value="UniProtKB-UniRule"/>
</dbReference>
<dbReference type="CDD" id="cd00487">
    <property type="entry name" value="Pep_deformylase"/>
    <property type="match status" value="1"/>
</dbReference>
<dbReference type="FunFam" id="3.90.45.10:FF:000002">
    <property type="entry name" value="Peptide deformylase"/>
    <property type="match status" value="1"/>
</dbReference>
<dbReference type="Gene3D" id="3.90.45.10">
    <property type="entry name" value="Peptide deformylase"/>
    <property type="match status" value="1"/>
</dbReference>
<dbReference type="HAMAP" id="MF_00163">
    <property type="entry name" value="Pep_deformylase"/>
    <property type="match status" value="1"/>
</dbReference>
<dbReference type="InterPro" id="IPR023635">
    <property type="entry name" value="Peptide_deformylase"/>
</dbReference>
<dbReference type="InterPro" id="IPR036821">
    <property type="entry name" value="Peptide_deformylase_sf"/>
</dbReference>
<dbReference type="NCBIfam" id="TIGR00079">
    <property type="entry name" value="pept_deformyl"/>
    <property type="match status" value="1"/>
</dbReference>
<dbReference type="PANTHER" id="PTHR10458">
    <property type="entry name" value="PEPTIDE DEFORMYLASE"/>
    <property type="match status" value="1"/>
</dbReference>
<dbReference type="PANTHER" id="PTHR10458:SF8">
    <property type="entry name" value="PEPTIDE DEFORMYLASE 2"/>
    <property type="match status" value="1"/>
</dbReference>
<dbReference type="Pfam" id="PF01327">
    <property type="entry name" value="Pep_deformylase"/>
    <property type="match status" value="1"/>
</dbReference>
<dbReference type="PIRSF" id="PIRSF004749">
    <property type="entry name" value="Pep_def"/>
    <property type="match status" value="1"/>
</dbReference>
<dbReference type="PRINTS" id="PR01576">
    <property type="entry name" value="PDEFORMYLASE"/>
</dbReference>
<dbReference type="SUPFAM" id="SSF56420">
    <property type="entry name" value="Peptide deformylase"/>
    <property type="match status" value="1"/>
</dbReference>